<sequence>MNTHPEQHANTALPTLPDQPQNPGVWPRAELTVAGIKARIDIFQHWLGEAFDSGICAEQLIEARTEFIDQLLQRLWIEAGFGQIADLALVAVGGYGRGELHPLSDIDLLILSRKKLPDEQAQKVGELLTLLWDVKLDVGHSVRTLEECLLEGLSDLTVATNLIETRLLIGDVALFLALQKHIFSEGFWPSDKFYAAKVEEQNQRHQRYHGTSYNLEPDIKSSPGGLRDIHTLQWVARRHFGATSLDEMVGFGFLTPAERAELNECLHILWRIRFALHLVVSRYDNRLLFDRQLSVAQRLNYSGEGNDPVERMMKDYFRVTRRVSELNQMLLQLFDEAILALPADEKPRPVDDEFQLRGTLIDLRDDTLFIREPQAILRMFYMMVRNSAITGIYSTTLRHLRHARRHLSQPLCYIPEARTLFLSMLRHPGAVSRGLLPMHRHSVLWAYMPQWSHIVGQMQFDLFHAYTVDEHTIRVMLKLESFAKEETRQRHPLCVDLWPRLPHPELILIAALFHDIAKGRGGDHSVLGAQDVLTFAELHGLNSRETQLVAWLVRQHLLMSVTAQRRDIQDPEVIKQFAEEVQTETRLRFLVCLTVADICATNETLWNSWKQSLLRELYFATEKQLRRGMQNTPDMRERVRHHQLQALALLRMDNIDEAALHKIWTRCRANYFVRHSPNQLAWHARHLLQHDLRQPLVLLSPQATRGGTEIFIWSPDRPYLFAAVCAELDRRNLSVHDAQIFTTRDGMAMDTFIVLEPDGSPLAADRHDVIRTGLEQTITQRSWQPPQPRRQPAKLRHFTVETEVNFLPTHTDRKSFMELIALDQPGLLARVGQIFADLGISLHGARITTIGERVEDLFIIATADRRALNNVLQLEVQQRLTAAFNPNDKG</sequence>
<protein>
    <recommendedName>
        <fullName evidence="1">Bifunctional uridylyltransferase/uridylyl-removing enzyme</fullName>
        <shortName evidence="1">UTase/UR</shortName>
    </recommendedName>
    <alternativeName>
        <fullName evidence="1">Bifunctional [protein-PII] modification enzyme</fullName>
    </alternativeName>
    <alternativeName>
        <fullName evidence="1">Bifunctional nitrogen sensor protein</fullName>
    </alternativeName>
    <domain>
        <recommendedName>
            <fullName evidence="1">[Protein-PII] uridylyltransferase</fullName>
            <shortName evidence="1">PII uridylyltransferase</shortName>
            <shortName evidence="1">UTase</shortName>
            <ecNumber evidence="1">2.7.7.59</ecNumber>
        </recommendedName>
    </domain>
    <domain>
        <recommendedName>
            <fullName evidence="1">[Protein-PII]-UMP uridylyl-removing enzyme</fullName>
            <shortName evidence="1">UR</shortName>
            <ecNumber evidence="1">3.1.4.-</ecNumber>
        </recommendedName>
    </domain>
</protein>
<comment type="function">
    <text evidence="1">Modifies, by uridylylation and deuridylylation, the PII regulatory proteins (GlnB and homologs), in response to the nitrogen status of the cell that GlnD senses through the glutamine level. Under low glutamine levels, catalyzes the conversion of the PII proteins and UTP to PII-UMP and PPi, while under higher glutamine levels, GlnD hydrolyzes PII-UMP to PII and UMP (deuridylylation). Thus, controls uridylylation state and activity of the PII proteins, and plays an important role in the regulation of nitrogen assimilation and metabolism.</text>
</comment>
<comment type="catalytic activity">
    <reaction evidence="1">
        <text>[protein-PII]-L-tyrosine + UTP = [protein-PII]-uridylyl-L-tyrosine + diphosphate</text>
        <dbReference type="Rhea" id="RHEA:13673"/>
        <dbReference type="Rhea" id="RHEA-COMP:12147"/>
        <dbReference type="Rhea" id="RHEA-COMP:12148"/>
        <dbReference type="ChEBI" id="CHEBI:33019"/>
        <dbReference type="ChEBI" id="CHEBI:46398"/>
        <dbReference type="ChEBI" id="CHEBI:46858"/>
        <dbReference type="ChEBI" id="CHEBI:90602"/>
        <dbReference type="EC" id="2.7.7.59"/>
    </reaction>
</comment>
<comment type="catalytic activity">
    <reaction evidence="1">
        <text>[protein-PII]-uridylyl-L-tyrosine + H2O = [protein-PII]-L-tyrosine + UMP + H(+)</text>
        <dbReference type="Rhea" id="RHEA:48600"/>
        <dbReference type="Rhea" id="RHEA-COMP:12147"/>
        <dbReference type="Rhea" id="RHEA-COMP:12148"/>
        <dbReference type="ChEBI" id="CHEBI:15377"/>
        <dbReference type="ChEBI" id="CHEBI:15378"/>
        <dbReference type="ChEBI" id="CHEBI:46858"/>
        <dbReference type="ChEBI" id="CHEBI:57865"/>
        <dbReference type="ChEBI" id="CHEBI:90602"/>
    </reaction>
</comment>
<comment type="cofactor">
    <cofactor evidence="1">
        <name>Mg(2+)</name>
        <dbReference type="ChEBI" id="CHEBI:18420"/>
    </cofactor>
</comment>
<comment type="activity regulation">
    <text evidence="1">Uridylyltransferase (UTase) activity is inhibited by glutamine, while glutamine activates uridylyl-removing (UR) activity.</text>
</comment>
<comment type="domain">
    <text evidence="1">Has four distinct domains: an N-terminal nucleotidyltransferase (NT) domain responsible for UTase activity, a central HD domain that encodes UR activity, and two C-terminal ACT domains that seem to have a role in glutamine sensing.</text>
</comment>
<comment type="similarity">
    <text evidence="1">Belongs to the GlnD family.</text>
</comment>
<gene>
    <name evidence="1" type="primary">glnD</name>
    <name type="ordered locus">SCH_0214</name>
</gene>
<accession>Q57T41</accession>
<dbReference type="EC" id="2.7.7.59" evidence="1"/>
<dbReference type="EC" id="3.1.4.-" evidence="1"/>
<dbReference type="EMBL" id="AE017220">
    <property type="protein sequence ID" value="AAX64120.1"/>
    <property type="molecule type" value="Genomic_DNA"/>
</dbReference>
<dbReference type="RefSeq" id="WP_001539051.1">
    <property type="nucleotide sequence ID" value="NC_006905.1"/>
</dbReference>
<dbReference type="SMR" id="Q57T41"/>
<dbReference type="KEGG" id="sec:SCH_0214"/>
<dbReference type="HOGENOM" id="CLU_012833_0_0_6"/>
<dbReference type="Proteomes" id="UP000000538">
    <property type="component" value="Chromosome"/>
</dbReference>
<dbReference type="GO" id="GO:0008773">
    <property type="term" value="F:[protein-PII] uridylyltransferase activity"/>
    <property type="evidence" value="ECO:0007669"/>
    <property type="project" value="UniProtKB-UniRule"/>
</dbReference>
<dbReference type="GO" id="GO:0008081">
    <property type="term" value="F:phosphoric diester hydrolase activity"/>
    <property type="evidence" value="ECO:0007669"/>
    <property type="project" value="UniProtKB-UniRule"/>
</dbReference>
<dbReference type="GO" id="GO:0006808">
    <property type="term" value="P:regulation of nitrogen utilization"/>
    <property type="evidence" value="ECO:0007669"/>
    <property type="project" value="UniProtKB-UniRule"/>
</dbReference>
<dbReference type="CDD" id="cd04899">
    <property type="entry name" value="ACT_ACR-UUR-like_2"/>
    <property type="match status" value="1"/>
</dbReference>
<dbReference type="CDD" id="cd04900">
    <property type="entry name" value="ACT_UUR-like_1"/>
    <property type="match status" value="1"/>
</dbReference>
<dbReference type="CDD" id="cd00077">
    <property type="entry name" value="HDc"/>
    <property type="match status" value="1"/>
</dbReference>
<dbReference type="CDD" id="cd05401">
    <property type="entry name" value="NT_GlnE_GlnD_like"/>
    <property type="match status" value="1"/>
</dbReference>
<dbReference type="FunFam" id="1.10.3210.10:FF:000005">
    <property type="entry name" value="Bifunctional uridylyltransferase/uridylyl-removing enzyme"/>
    <property type="match status" value="1"/>
</dbReference>
<dbReference type="Gene3D" id="1.10.3210.10">
    <property type="entry name" value="Hypothetical protein af1432"/>
    <property type="match status" value="1"/>
</dbReference>
<dbReference type="Gene3D" id="1.20.120.330">
    <property type="entry name" value="Nucleotidyltransferases domain 2"/>
    <property type="match status" value="1"/>
</dbReference>
<dbReference type="HAMAP" id="MF_00277">
    <property type="entry name" value="PII_uridylyl_transf"/>
    <property type="match status" value="1"/>
</dbReference>
<dbReference type="InterPro" id="IPR045865">
    <property type="entry name" value="ACT-like_dom_sf"/>
</dbReference>
<dbReference type="InterPro" id="IPR002912">
    <property type="entry name" value="ACT_dom"/>
</dbReference>
<dbReference type="InterPro" id="IPR003607">
    <property type="entry name" value="HD/PDEase_dom"/>
</dbReference>
<dbReference type="InterPro" id="IPR006674">
    <property type="entry name" value="HD_domain"/>
</dbReference>
<dbReference type="InterPro" id="IPR043519">
    <property type="entry name" value="NT_sf"/>
</dbReference>
<dbReference type="InterPro" id="IPR013546">
    <property type="entry name" value="PII_UdlTrfase/GS_AdlTrfase"/>
</dbReference>
<dbReference type="InterPro" id="IPR002934">
    <property type="entry name" value="Polymerase_NTP_transf_dom"/>
</dbReference>
<dbReference type="InterPro" id="IPR010043">
    <property type="entry name" value="UTase/UR"/>
</dbReference>
<dbReference type="NCBIfam" id="NF002487">
    <property type="entry name" value="PRK01759.1"/>
    <property type="match status" value="1"/>
</dbReference>
<dbReference type="NCBIfam" id="NF003448">
    <property type="entry name" value="PRK05007.1"/>
    <property type="match status" value="1"/>
</dbReference>
<dbReference type="NCBIfam" id="TIGR01693">
    <property type="entry name" value="UTase_glnD"/>
    <property type="match status" value="1"/>
</dbReference>
<dbReference type="PANTHER" id="PTHR47320">
    <property type="entry name" value="BIFUNCTIONAL URIDYLYLTRANSFERASE/URIDYLYL-REMOVING ENZYME"/>
    <property type="match status" value="1"/>
</dbReference>
<dbReference type="PANTHER" id="PTHR47320:SF1">
    <property type="entry name" value="BIFUNCTIONAL URIDYLYLTRANSFERASE_URIDYLYL-REMOVING ENZYME"/>
    <property type="match status" value="1"/>
</dbReference>
<dbReference type="Pfam" id="PF01842">
    <property type="entry name" value="ACT"/>
    <property type="match status" value="2"/>
</dbReference>
<dbReference type="Pfam" id="PF08335">
    <property type="entry name" value="GlnD_UR_UTase"/>
    <property type="match status" value="1"/>
</dbReference>
<dbReference type="Pfam" id="PF01966">
    <property type="entry name" value="HD"/>
    <property type="match status" value="1"/>
</dbReference>
<dbReference type="Pfam" id="PF01909">
    <property type="entry name" value="NTP_transf_2"/>
    <property type="match status" value="1"/>
</dbReference>
<dbReference type="PIRSF" id="PIRSF006288">
    <property type="entry name" value="PII_uridyltransf"/>
    <property type="match status" value="1"/>
</dbReference>
<dbReference type="SMART" id="SM00471">
    <property type="entry name" value="HDc"/>
    <property type="match status" value="1"/>
</dbReference>
<dbReference type="SUPFAM" id="SSF55021">
    <property type="entry name" value="ACT-like"/>
    <property type="match status" value="2"/>
</dbReference>
<dbReference type="SUPFAM" id="SSF109604">
    <property type="entry name" value="HD-domain/PDEase-like"/>
    <property type="match status" value="1"/>
</dbReference>
<dbReference type="SUPFAM" id="SSF81301">
    <property type="entry name" value="Nucleotidyltransferase"/>
    <property type="match status" value="1"/>
</dbReference>
<dbReference type="SUPFAM" id="SSF81593">
    <property type="entry name" value="Nucleotidyltransferase substrate binding subunit/domain"/>
    <property type="match status" value="1"/>
</dbReference>
<dbReference type="PROSITE" id="PS51671">
    <property type="entry name" value="ACT"/>
    <property type="match status" value="2"/>
</dbReference>
<dbReference type="PROSITE" id="PS51831">
    <property type="entry name" value="HD"/>
    <property type="match status" value="1"/>
</dbReference>
<proteinExistence type="inferred from homology"/>
<name>GLND_SALCH</name>
<evidence type="ECO:0000255" key="1">
    <source>
        <dbReference type="HAMAP-Rule" id="MF_00277"/>
    </source>
</evidence>
<evidence type="ECO:0000255" key="2">
    <source>
        <dbReference type="PROSITE-ProRule" id="PRU01175"/>
    </source>
</evidence>
<evidence type="ECO:0000256" key="3">
    <source>
        <dbReference type="SAM" id="MobiDB-lite"/>
    </source>
</evidence>
<feature type="chain" id="PRO_0000192763" description="Bifunctional uridylyltransferase/uridylyl-removing enzyme">
    <location>
        <begin position="1"/>
        <end position="890"/>
    </location>
</feature>
<feature type="domain" description="HD" evidence="2">
    <location>
        <begin position="468"/>
        <end position="590"/>
    </location>
</feature>
<feature type="domain" description="ACT 1" evidence="1">
    <location>
        <begin position="709"/>
        <end position="784"/>
    </location>
</feature>
<feature type="domain" description="ACT 2" evidence="1">
    <location>
        <begin position="816"/>
        <end position="890"/>
    </location>
</feature>
<feature type="region of interest" description="Uridylyltransferase">
    <location>
        <begin position="1"/>
        <end position="349"/>
    </location>
</feature>
<feature type="region of interest" description="Disordered" evidence="3">
    <location>
        <begin position="1"/>
        <end position="24"/>
    </location>
</feature>
<feature type="region of interest" description="Uridylyl-removing">
    <location>
        <begin position="350"/>
        <end position="708"/>
    </location>
</feature>
<feature type="compositionally biased region" description="Polar residues" evidence="3">
    <location>
        <begin position="1"/>
        <end position="22"/>
    </location>
</feature>
<keyword id="KW-0378">Hydrolase</keyword>
<keyword id="KW-0460">Magnesium</keyword>
<keyword id="KW-0511">Multifunctional enzyme</keyword>
<keyword id="KW-0548">Nucleotidyltransferase</keyword>
<keyword id="KW-0677">Repeat</keyword>
<keyword id="KW-0808">Transferase</keyword>
<reference key="1">
    <citation type="journal article" date="2005" name="Nucleic Acids Res.">
        <title>The genome sequence of Salmonella enterica serovar Choleraesuis, a highly invasive and resistant zoonotic pathogen.</title>
        <authorList>
            <person name="Chiu C.-H."/>
            <person name="Tang P."/>
            <person name="Chu C."/>
            <person name="Hu S."/>
            <person name="Bao Q."/>
            <person name="Yu J."/>
            <person name="Chou Y.-Y."/>
            <person name="Wang H.-S."/>
            <person name="Lee Y.-S."/>
        </authorList>
    </citation>
    <scope>NUCLEOTIDE SEQUENCE [LARGE SCALE GENOMIC DNA]</scope>
    <source>
        <strain>SC-B67</strain>
    </source>
</reference>
<organism>
    <name type="scientific">Salmonella choleraesuis (strain SC-B67)</name>
    <dbReference type="NCBI Taxonomy" id="321314"/>
    <lineage>
        <taxon>Bacteria</taxon>
        <taxon>Pseudomonadati</taxon>
        <taxon>Pseudomonadota</taxon>
        <taxon>Gammaproteobacteria</taxon>
        <taxon>Enterobacterales</taxon>
        <taxon>Enterobacteriaceae</taxon>
        <taxon>Salmonella</taxon>
    </lineage>
</organism>